<feature type="chain" id="PRO_1000078567" description="Glutamate racemase">
    <location>
        <begin position="1"/>
        <end position="270"/>
    </location>
</feature>
<feature type="active site" description="Proton donor/acceptor" evidence="1">
    <location>
        <position position="70"/>
    </location>
</feature>
<feature type="active site" description="Proton donor/acceptor" evidence="1">
    <location>
        <position position="194"/>
    </location>
</feature>
<feature type="binding site" evidence="1">
    <location>
        <begin position="7"/>
        <end position="8"/>
    </location>
    <ligand>
        <name>substrate</name>
    </ligand>
</feature>
<feature type="binding site" evidence="1">
    <location>
        <begin position="39"/>
        <end position="40"/>
    </location>
    <ligand>
        <name>substrate</name>
    </ligand>
</feature>
<feature type="binding site" evidence="1">
    <location>
        <begin position="71"/>
        <end position="72"/>
    </location>
    <ligand>
        <name>substrate</name>
    </ligand>
</feature>
<feature type="binding site" evidence="1">
    <location>
        <begin position="195"/>
        <end position="196"/>
    </location>
    <ligand>
        <name>substrate</name>
    </ligand>
</feature>
<reference key="1">
    <citation type="submission" date="2007-04" db="EMBL/GenBank/DDBJ databases">
        <title>Complete sequence of chromosome of Rhodobacter sphaeroides ATCC 17025.</title>
        <authorList>
            <consortium name="US DOE Joint Genome Institute"/>
            <person name="Copeland A."/>
            <person name="Lucas S."/>
            <person name="Lapidus A."/>
            <person name="Barry K."/>
            <person name="Detter J.C."/>
            <person name="Glavina del Rio T."/>
            <person name="Hammon N."/>
            <person name="Israni S."/>
            <person name="Dalin E."/>
            <person name="Tice H."/>
            <person name="Pitluck S."/>
            <person name="Chertkov O."/>
            <person name="Brettin T."/>
            <person name="Bruce D."/>
            <person name="Han C."/>
            <person name="Schmutz J."/>
            <person name="Larimer F."/>
            <person name="Land M."/>
            <person name="Hauser L."/>
            <person name="Kyrpides N."/>
            <person name="Kim E."/>
            <person name="Richardson P."/>
            <person name="Mackenzie C."/>
            <person name="Choudhary M."/>
            <person name="Donohue T.J."/>
            <person name="Kaplan S."/>
        </authorList>
    </citation>
    <scope>NUCLEOTIDE SEQUENCE [LARGE SCALE GENOMIC DNA]</scope>
    <source>
        <strain>ATCC 17025 / ATH 2.4.3</strain>
    </source>
</reference>
<name>MURI_CERS5</name>
<dbReference type="EC" id="5.1.1.3" evidence="1"/>
<dbReference type="EMBL" id="CP000661">
    <property type="protein sequence ID" value="ABP69800.1"/>
    <property type="molecule type" value="Genomic_DNA"/>
</dbReference>
<dbReference type="SMR" id="A4WQY6"/>
<dbReference type="STRING" id="349102.Rsph17025_0897"/>
<dbReference type="KEGG" id="rsq:Rsph17025_0897"/>
<dbReference type="eggNOG" id="COG0796">
    <property type="taxonomic scope" value="Bacteria"/>
</dbReference>
<dbReference type="HOGENOM" id="CLU_052344_0_3_5"/>
<dbReference type="BioCyc" id="RSPH349102:G1G8M-920-MONOMER"/>
<dbReference type="UniPathway" id="UPA00219"/>
<dbReference type="GO" id="GO:0008881">
    <property type="term" value="F:glutamate racemase activity"/>
    <property type="evidence" value="ECO:0007669"/>
    <property type="project" value="UniProtKB-UniRule"/>
</dbReference>
<dbReference type="GO" id="GO:0071555">
    <property type="term" value="P:cell wall organization"/>
    <property type="evidence" value="ECO:0007669"/>
    <property type="project" value="UniProtKB-KW"/>
</dbReference>
<dbReference type="GO" id="GO:0009252">
    <property type="term" value="P:peptidoglycan biosynthetic process"/>
    <property type="evidence" value="ECO:0007669"/>
    <property type="project" value="UniProtKB-UniRule"/>
</dbReference>
<dbReference type="GO" id="GO:0008360">
    <property type="term" value="P:regulation of cell shape"/>
    <property type="evidence" value="ECO:0007669"/>
    <property type="project" value="UniProtKB-KW"/>
</dbReference>
<dbReference type="Gene3D" id="3.40.50.1860">
    <property type="match status" value="2"/>
</dbReference>
<dbReference type="HAMAP" id="MF_00258">
    <property type="entry name" value="Glu_racemase"/>
    <property type="match status" value="1"/>
</dbReference>
<dbReference type="InterPro" id="IPR015942">
    <property type="entry name" value="Asp/Glu/hydantoin_racemase"/>
</dbReference>
<dbReference type="InterPro" id="IPR001920">
    <property type="entry name" value="Asp/Glu_race"/>
</dbReference>
<dbReference type="InterPro" id="IPR018187">
    <property type="entry name" value="Asp/Glu_racemase_AS_1"/>
</dbReference>
<dbReference type="InterPro" id="IPR004391">
    <property type="entry name" value="Glu_race"/>
</dbReference>
<dbReference type="PANTHER" id="PTHR21198">
    <property type="entry name" value="GLUTAMATE RACEMASE"/>
    <property type="match status" value="1"/>
</dbReference>
<dbReference type="PANTHER" id="PTHR21198:SF2">
    <property type="entry name" value="GLUTAMATE RACEMASE"/>
    <property type="match status" value="1"/>
</dbReference>
<dbReference type="Pfam" id="PF01177">
    <property type="entry name" value="Asp_Glu_race"/>
    <property type="match status" value="1"/>
</dbReference>
<dbReference type="SUPFAM" id="SSF53681">
    <property type="entry name" value="Aspartate/glutamate racemase"/>
    <property type="match status" value="2"/>
</dbReference>
<dbReference type="PROSITE" id="PS00923">
    <property type="entry name" value="ASP_GLU_RACEMASE_1"/>
    <property type="match status" value="1"/>
</dbReference>
<keyword id="KW-0133">Cell shape</keyword>
<keyword id="KW-0961">Cell wall biogenesis/degradation</keyword>
<keyword id="KW-0413">Isomerase</keyword>
<keyword id="KW-0573">Peptidoglycan synthesis</keyword>
<gene>
    <name evidence="1" type="primary">murI</name>
    <name type="ordered locus">Rsph17025_0897</name>
</gene>
<accession>A4WQY6</accession>
<comment type="function">
    <text evidence="1">Provides the (R)-glutamate required for cell wall biosynthesis.</text>
</comment>
<comment type="catalytic activity">
    <reaction evidence="1">
        <text>L-glutamate = D-glutamate</text>
        <dbReference type="Rhea" id="RHEA:12813"/>
        <dbReference type="ChEBI" id="CHEBI:29985"/>
        <dbReference type="ChEBI" id="CHEBI:29986"/>
        <dbReference type="EC" id="5.1.1.3"/>
    </reaction>
</comment>
<comment type="pathway">
    <text evidence="1">Cell wall biogenesis; peptidoglycan biosynthesis.</text>
</comment>
<comment type="similarity">
    <text evidence="1">Belongs to the aspartate/glutamate racemases family.</text>
</comment>
<sequence length="270" mass="29410">MAVGVFDSGLGGLTVLDAVQRRLPEVPFVYFGDNAHAPYGVRDADDIFALTCAATERLWAEGCDLVILACNTASAAALKRMQESWIPRDKRVLGVFVPLIEALTERQWGDNSPPREVAVKHVALFATPATVASRAFQRELAFRAIGVDVEAQPCGGVVDAIEQGDEILAEALVRSHVEALKRRMPHPQAAILGCTHYPLMEATFQEALGPEVTVYSQANLVAESLADYLARRPEFVGQGTESKFLTTGDPRSVSNKATQFLRRRITFEAA</sequence>
<protein>
    <recommendedName>
        <fullName evidence="1">Glutamate racemase</fullName>
        <ecNumber evidence="1">5.1.1.3</ecNumber>
    </recommendedName>
</protein>
<proteinExistence type="inferred from homology"/>
<organism>
    <name type="scientific">Cereibacter sphaeroides (strain ATCC 17025 / ATH 2.4.3)</name>
    <name type="common">Rhodobacter sphaeroides</name>
    <dbReference type="NCBI Taxonomy" id="349102"/>
    <lineage>
        <taxon>Bacteria</taxon>
        <taxon>Pseudomonadati</taxon>
        <taxon>Pseudomonadota</taxon>
        <taxon>Alphaproteobacteria</taxon>
        <taxon>Rhodobacterales</taxon>
        <taxon>Paracoccaceae</taxon>
        <taxon>Cereibacter</taxon>
    </lineage>
</organism>
<evidence type="ECO:0000255" key="1">
    <source>
        <dbReference type="HAMAP-Rule" id="MF_00258"/>
    </source>
</evidence>